<organism>
    <name type="scientific">Buchnera aphidicola subsp. Acyrthosiphon pisum (strain APS)</name>
    <name type="common">Acyrthosiphon pisum symbiotic bacterium</name>
    <dbReference type="NCBI Taxonomy" id="107806"/>
    <lineage>
        <taxon>Bacteria</taxon>
        <taxon>Pseudomonadati</taxon>
        <taxon>Pseudomonadota</taxon>
        <taxon>Gammaproteobacteria</taxon>
        <taxon>Enterobacterales</taxon>
        <taxon>Erwiniaceae</taxon>
        <taxon>Buchnera</taxon>
    </lineage>
</organism>
<feature type="chain" id="PRO_0000160022" description="Superoxide dismutase [Mn]">
    <location>
        <begin position="1"/>
        <end position="203"/>
    </location>
</feature>
<feature type="binding site" evidence="1">
    <location>
        <position position="27"/>
    </location>
    <ligand>
        <name>Mn(2+)</name>
        <dbReference type="ChEBI" id="CHEBI:29035"/>
    </ligand>
</feature>
<feature type="binding site" evidence="1">
    <location>
        <position position="81"/>
    </location>
    <ligand>
        <name>Mn(2+)</name>
        <dbReference type="ChEBI" id="CHEBI:29035"/>
    </ligand>
</feature>
<feature type="binding site" evidence="1">
    <location>
        <position position="167"/>
    </location>
    <ligand>
        <name>Mn(2+)</name>
        <dbReference type="ChEBI" id="CHEBI:29035"/>
    </ligand>
</feature>
<feature type="binding site" evidence="1">
    <location>
        <position position="171"/>
    </location>
    <ligand>
        <name>Mn(2+)</name>
        <dbReference type="ChEBI" id="CHEBI:29035"/>
    </ligand>
</feature>
<gene>
    <name type="primary">sodA</name>
    <name type="ordered locus">BU189</name>
</gene>
<name>SODM_BUCAI</name>
<accession>P57286</accession>
<proteinExistence type="inferred from homology"/>
<protein>
    <recommendedName>
        <fullName>Superoxide dismutase [Mn]</fullName>
        <ecNumber>1.15.1.1</ecNumber>
    </recommendedName>
</protein>
<dbReference type="EC" id="1.15.1.1"/>
<dbReference type="EMBL" id="BA000003">
    <property type="protein sequence ID" value="BAB12906.1"/>
    <property type="molecule type" value="Genomic_DNA"/>
</dbReference>
<dbReference type="RefSeq" id="NP_240020.1">
    <property type="nucleotide sequence ID" value="NC_002528.1"/>
</dbReference>
<dbReference type="RefSeq" id="WP_009874146.1">
    <property type="nucleotide sequence ID" value="NZ_AP036055.1"/>
</dbReference>
<dbReference type="SMR" id="P57286"/>
<dbReference type="STRING" id="563178.BUAP5A_186"/>
<dbReference type="EnsemblBacteria" id="BAB12906">
    <property type="protein sequence ID" value="BAB12906"/>
    <property type="gene ID" value="BAB12906"/>
</dbReference>
<dbReference type="KEGG" id="buc:BU189"/>
<dbReference type="PATRIC" id="fig|107806.10.peg.200"/>
<dbReference type="eggNOG" id="COG0605">
    <property type="taxonomic scope" value="Bacteria"/>
</dbReference>
<dbReference type="HOGENOM" id="CLU_031625_0_1_6"/>
<dbReference type="Proteomes" id="UP000001806">
    <property type="component" value="Chromosome"/>
</dbReference>
<dbReference type="GO" id="GO:0005737">
    <property type="term" value="C:cytoplasm"/>
    <property type="evidence" value="ECO:0007669"/>
    <property type="project" value="TreeGrafter"/>
</dbReference>
<dbReference type="GO" id="GO:0046872">
    <property type="term" value="F:metal ion binding"/>
    <property type="evidence" value="ECO:0007669"/>
    <property type="project" value="UniProtKB-KW"/>
</dbReference>
<dbReference type="GO" id="GO:0004784">
    <property type="term" value="F:superoxide dismutase activity"/>
    <property type="evidence" value="ECO:0007669"/>
    <property type="project" value="UniProtKB-EC"/>
</dbReference>
<dbReference type="FunFam" id="1.10.287.990:FF:000001">
    <property type="entry name" value="Superoxide dismutase"/>
    <property type="match status" value="1"/>
</dbReference>
<dbReference type="Gene3D" id="1.10.287.990">
    <property type="entry name" value="Fe,Mn superoxide dismutase (SOD) domain"/>
    <property type="match status" value="1"/>
</dbReference>
<dbReference type="Gene3D" id="3.55.40.20">
    <property type="entry name" value="Iron/manganese superoxide dismutase, C-terminal domain"/>
    <property type="match status" value="1"/>
</dbReference>
<dbReference type="InterPro" id="IPR001189">
    <property type="entry name" value="Mn/Fe_SOD"/>
</dbReference>
<dbReference type="InterPro" id="IPR019833">
    <property type="entry name" value="Mn/Fe_SOD_BS"/>
</dbReference>
<dbReference type="InterPro" id="IPR019832">
    <property type="entry name" value="Mn/Fe_SOD_C"/>
</dbReference>
<dbReference type="InterPro" id="IPR019831">
    <property type="entry name" value="Mn/Fe_SOD_N"/>
</dbReference>
<dbReference type="InterPro" id="IPR036324">
    <property type="entry name" value="Mn/Fe_SOD_N_sf"/>
</dbReference>
<dbReference type="InterPro" id="IPR036314">
    <property type="entry name" value="SOD_C_sf"/>
</dbReference>
<dbReference type="PANTHER" id="PTHR43595">
    <property type="entry name" value="37S RIBOSOMAL PROTEIN S26, MITOCHONDRIAL"/>
    <property type="match status" value="1"/>
</dbReference>
<dbReference type="PANTHER" id="PTHR43595:SF2">
    <property type="entry name" value="SMALL RIBOSOMAL SUBUNIT PROTEIN MS42"/>
    <property type="match status" value="1"/>
</dbReference>
<dbReference type="Pfam" id="PF02777">
    <property type="entry name" value="Sod_Fe_C"/>
    <property type="match status" value="1"/>
</dbReference>
<dbReference type="Pfam" id="PF00081">
    <property type="entry name" value="Sod_Fe_N"/>
    <property type="match status" value="1"/>
</dbReference>
<dbReference type="PIRSF" id="PIRSF000349">
    <property type="entry name" value="SODismutase"/>
    <property type="match status" value="1"/>
</dbReference>
<dbReference type="PRINTS" id="PR01703">
    <property type="entry name" value="MNSODISMTASE"/>
</dbReference>
<dbReference type="SUPFAM" id="SSF54719">
    <property type="entry name" value="Fe,Mn superoxide dismutase (SOD), C-terminal domain"/>
    <property type="match status" value="1"/>
</dbReference>
<dbReference type="SUPFAM" id="SSF46609">
    <property type="entry name" value="Fe,Mn superoxide dismutase (SOD), N-terminal domain"/>
    <property type="match status" value="1"/>
</dbReference>
<dbReference type="PROSITE" id="PS00088">
    <property type="entry name" value="SOD_MN"/>
    <property type="match status" value="1"/>
</dbReference>
<reference key="1">
    <citation type="journal article" date="2000" name="Nature">
        <title>Genome sequence of the endocellular bacterial symbiont of aphids Buchnera sp. APS.</title>
        <authorList>
            <person name="Shigenobu S."/>
            <person name="Watanabe H."/>
            <person name="Hattori M."/>
            <person name="Sakaki Y."/>
            <person name="Ishikawa H."/>
        </authorList>
    </citation>
    <scope>NUCLEOTIDE SEQUENCE [LARGE SCALE GENOMIC DNA]</scope>
    <source>
        <strain>APS</strain>
    </source>
</reference>
<comment type="function">
    <text>Destroys superoxide anion radicals which are normally produced within the cells and which are toxic to biological systems.</text>
</comment>
<comment type="catalytic activity">
    <reaction>
        <text>2 superoxide + 2 H(+) = H2O2 + O2</text>
        <dbReference type="Rhea" id="RHEA:20696"/>
        <dbReference type="ChEBI" id="CHEBI:15378"/>
        <dbReference type="ChEBI" id="CHEBI:15379"/>
        <dbReference type="ChEBI" id="CHEBI:16240"/>
        <dbReference type="ChEBI" id="CHEBI:18421"/>
        <dbReference type="EC" id="1.15.1.1"/>
    </reaction>
</comment>
<comment type="cofactor">
    <cofactor evidence="1">
        <name>Mn(2+)</name>
        <dbReference type="ChEBI" id="CHEBI:29035"/>
    </cofactor>
    <text evidence="1">Binds 1 Mn(2+) ion per subunit.</text>
</comment>
<comment type="subunit">
    <text evidence="1">Homodimer.</text>
</comment>
<comment type="similarity">
    <text evidence="2">Belongs to the iron/manganese superoxide dismutase family.</text>
</comment>
<evidence type="ECO:0000250" key="1"/>
<evidence type="ECO:0000305" key="2"/>
<keyword id="KW-0464">Manganese</keyword>
<keyword id="KW-0479">Metal-binding</keyword>
<keyword id="KW-0560">Oxidoreductase</keyword>
<keyword id="KW-1185">Reference proteome</keyword>
<sequence length="203" mass="23633">MSYVLPSLPYSYNALEPFFDEETMKIHHTKHHQNYINNTNSILENTTFSSLPIEELISILNEIILEKKNALRNNAGGHINHSFFWKSLKSGTVLTNDLKIEIEKQFGTIDEFKEKFESVALNHFGSGWVWLVNQNGVLSIVSTVNQDSPLMGKLISNTYGYPIIGLDIWEHAYYLKYQNRRLDYIKSFWNVVNWEEASNRLQK</sequence>